<comment type="function">
    <text evidence="1">Catalyzes the pyruvoyl-dependent decarboxylation of aspartate to produce beta-alanine.</text>
</comment>
<comment type="catalytic activity">
    <reaction evidence="1">
        <text>L-aspartate + H(+) = beta-alanine + CO2</text>
        <dbReference type="Rhea" id="RHEA:19497"/>
        <dbReference type="ChEBI" id="CHEBI:15378"/>
        <dbReference type="ChEBI" id="CHEBI:16526"/>
        <dbReference type="ChEBI" id="CHEBI:29991"/>
        <dbReference type="ChEBI" id="CHEBI:57966"/>
        <dbReference type="EC" id="4.1.1.11"/>
    </reaction>
</comment>
<comment type="cofactor">
    <cofactor evidence="1">
        <name>pyruvate</name>
        <dbReference type="ChEBI" id="CHEBI:15361"/>
    </cofactor>
    <text evidence="1">Binds 1 pyruvoyl group covalently per subunit.</text>
</comment>
<comment type="pathway">
    <text evidence="1">Cofactor biosynthesis; (R)-pantothenate biosynthesis; beta-alanine from L-aspartate: step 1/1.</text>
</comment>
<comment type="subunit">
    <text evidence="1">Heterooctamer of four alpha and four beta subunits.</text>
</comment>
<comment type="subcellular location">
    <subcellularLocation>
        <location evidence="1">Cytoplasm</location>
    </subcellularLocation>
</comment>
<comment type="PTM">
    <text evidence="1">Is synthesized initially as an inactive proenzyme, which is activated by self-cleavage at a specific serine bond to produce a beta-subunit with a hydroxyl group at its C-terminus and an alpha-subunit with a pyruvoyl group at its N-terminus.</text>
</comment>
<comment type="similarity">
    <text evidence="1">Belongs to the PanD family.</text>
</comment>
<keyword id="KW-0068">Autocatalytic cleavage</keyword>
<keyword id="KW-0963">Cytoplasm</keyword>
<keyword id="KW-0210">Decarboxylase</keyword>
<keyword id="KW-0456">Lyase</keyword>
<keyword id="KW-0566">Pantothenate biosynthesis</keyword>
<keyword id="KW-0670">Pyruvate</keyword>
<keyword id="KW-0704">Schiff base</keyword>
<keyword id="KW-0865">Zymogen</keyword>
<dbReference type="EC" id="4.1.1.11" evidence="1"/>
<dbReference type="EMBL" id="CP000046">
    <property type="protein sequence ID" value="AAW38612.1"/>
    <property type="molecule type" value="Genomic_DNA"/>
</dbReference>
<dbReference type="RefSeq" id="WP_000621532.1">
    <property type="nucleotide sequence ID" value="NZ_JBGOFO010000001.1"/>
</dbReference>
<dbReference type="SMR" id="Q5HCV5"/>
<dbReference type="GeneID" id="98346911"/>
<dbReference type="KEGG" id="sac:SACOL2613"/>
<dbReference type="HOGENOM" id="CLU_115305_2_0_9"/>
<dbReference type="UniPathway" id="UPA00028">
    <property type="reaction ID" value="UER00002"/>
</dbReference>
<dbReference type="Proteomes" id="UP000000530">
    <property type="component" value="Chromosome"/>
</dbReference>
<dbReference type="GO" id="GO:0005829">
    <property type="term" value="C:cytosol"/>
    <property type="evidence" value="ECO:0007669"/>
    <property type="project" value="TreeGrafter"/>
</dbReference>
<dbReference type="GO" id="GO:0004068">
    <property type="term" value="F:aspartate 1-decarboxylase activity"/>
    <property type="evidence" value="ECO:0007669"/>
    <property type="project" value="UniProtKB-UniRule"/>
</dbReference>
<dbReference type="GO" id="GO:0006523">
    <property type="term" value="P:alanine biosynthetic process"/>
    <property type="evidence" value="ECO:0007669"/>
    <property type="project" value="InterPro"/>
</dbReference>
<dbReference type="GO" id="GO:0015940">
    <property type="term" value="P:pantothenate biosynthetic process"/>
    <property type="evidence" value="ECO:0007669"/>
    <property type="project" value="UniProtKB-UniRule"/>
</dbReference>
<dbReference type="CDD" id="cd06919">
    <property type="entry name" value="Asp_decarbox"/>
    <property type="match status" value="1"/>
</dbReference>
<dbReference type="Gene3D" id="2.40.40.20">
    <property type="match status" value="1"/>
</dbReference>
<dbReference type="HAMAP" id="MF_00446">
    <property type="entry name" value="PanD"/>
    <property type="match status" value="1"/>
</dbReference>
<dbReference type="InterPro" id="IPR009010">
    <property type="entry name" value="Asp_de-COase-like_dom_sf"/>
</dbReference>
<dbReference type="InterPro" id="IPR003190">
    <property type="entry name" value="Asp_decarbox"/>
</dbReference>
<dbReference type="NCBIfam" id="TIGR00223">
    <property type="entry name" value="panD"/>
    <property type="match status" value="1"/>
</dbReference>
<dbReference type="PANTHER" id="PTHR21012">
    <property type="entry name" value="ASPARTATE 1-DECARBOXYLASE"/>
    <property type="match status" value="1"/>
</dbReference>
<dbReference type="PANTHER" id="PTHR21012:SF0">
    <property type="entry name" value="ASPARTATE 1-DECARBOXYLASE"/>
    <property type="match status" value="1"/>
</dbReference>
<dbReference type="Pfam" id="PF02261">
    <property type="entry name" value="Asp_decarbox"/>
    <property type="match status" value="1"/>
</dbReference>
<dbReference type="PIRSF" id="PIRSF006246">
    <property type="entry name" value="Asp_decarbox"/>
    <property type="match status" value="1"/>
</dbReference>
<dbReference type="SUPFAM" id="SSF50692">
    <property type="entry name" value="ADC-like"/>
    <property type="match status" value="1"/>
</dbReference>
<organism>
    <name type="scientific">Staphylococcus aureus (strain COL)</name>
    <dbReference type="NCBI Taxonomy" id="93062"/>
    <lineage>
        <taxon>Bacteria</taxon>
        <taxon>Bacillati</taxon>
        <taxon>Bacillota</taxon>
        <taxon>Bacilli</taxon>
        <taxon>Bacillales</taxon>
        <taxon>Staphylococcaceae</taxon>
        <taxon>Staphylococcus</taxon>
    </lineage>
</organism>
<sequence>MIRTMMNAKIHRARVTESNLNYVGSITIDSDILEAVDILPNEKVAIVNNNNGARFETYVIAGERGSGKICLNGAASRLVEVGDVVIIMTYAQLNEEEIKNHAPKVAVMNEDNVIIEMIHEKENTIVL</sequence>
<evidence type="ECO:0000255" key="1">
    <source>
        <dbReference type="HAMAP-Rule" id="MF_00446"/>
    </source>
</evidence>
<feature type="chain" id="PRO_0000023157" description="Aspartate 1-decarboxylase beta chain" evidence="1">
    <location>
        <begin position="1"/>
        <end position="24"/>
    </location>
</feature>
<feature type="chain" id="PRO_0000023158" description="Aspartate 1-decarboxylase alpha chain" evidence="1">
    <location>
        <begin position="25"/>
        <end position="127"/>
    </location>
</feature>
<feature type="active site" description="Schiff-base intermediate with substrate; via pyruvic acid" evidence="1">
    <location>
        <position position="25"/>
    </location>
</feature>
<feature type="active site" description="Proton donor" evidence="1">
    <location>
        <position position="58"/>
    </location>
</feature>
<feature type="binding site" evidence="1">
    <location>
        <position position="57"/>
    </location>
    <ligand>
        <name>substrate</name>
    </ligand>
</feature>
<feature type="binding site" evidence="1">
    <location>
        <begin position="73"/>
        <end position="75"/>
    </location>
    <ligand>
        <name>substrate</name>
    </ligand>
</feature>
<feature type="modified residue" description="Pyruvic acid (Ser)" evidence="1">
    <location>
        <position position="25"/>
    </location>
</feature>
<protein>
    <recommendedName>
        <fullName evidence="1">Aspartate 1-decarboxylase</fullName>
        <ecNumber evidence="1">4.1.1.11</ecNumber>
    </recommendedName>
    <alternativeName>
        <fullName evidence="1">Aspartate alpha-decarboxylase</fullName>
    </alternativeName>
    <component>
        <recommendedName>
            <fullName evidence="1">Aspartate 1-decarboxylase beta chain</fullName>
        </recommendedName>
    </component>
    <component>
        <recommendedName>
            <fullName evidence="1">Aspartate 1-decarboxylase alpha chain</fullName>
        </recommendedName>
    </component>
</protein>
<accession>Q5HCV5</accession>
<name>PAND_STAAC</name>
<gene>
    <name evidence="1" type="primary">panD</name>
    <name type="ordered locus">SACOL2613</name>
</gene>
<proteinExistence type="inferred from homology"/>
<reference key="1">
    <citation type="journal article" date="2005" name="J. Bacteriol.">
        <title>Insights on evolution of virulence and resistance from the complete genome analysis of an early methicillin-resistant Staphylococcus aureus strain and a biofilm-producing methicillin-resistant Staphylococcus epidermidis strain.</title>
        <authorList>
            <person name="Gill S.R."/>
            <person name="Fouts D.E."/>
            <person name="Archer G.L."/>
            <person name="Mongodin E.F."/>
            <person name="DeBoy R.T."/>
            <person name="Ravel J."/>
            <person name="Paulsen I.T."/>
            <person name="Kolonay J.F."/>
            <person name="Brinkac L.M."/>
            <person name="Beanan M.J."/>
            <person name="Dodson R.J."/>
            <person name="Daugherty S.C."/>
            <person name="Madupu R."/>
            <person name="Angiuoli S.V."/>
            <person name="Durkin A.S."/>
            <person name="Haft D.H."/>
            <person name="Vamathevan J.J."/>
            <person name="Khouri H."/>
            <person name="Utterback T.R."/>
            <person name="Lee C."/>
            <person name="Dimitrov G."/>
            <person name="Jiang L."/>
            <person name="Qin H."/>
            <person name="Weidman J."/>
            <person name="Tran K."/>
            <person name="Kang K.H."/>
            <person name="Hance I.R."/>
            <person name="Nelson K.E."/>
            <person name="Fraser C.M."/>
        </authorList>
    </citation>
    <scope>NUCLEOTIDE SEQUENCE [LARGE SCALE GENOMIC DNA]</scope>
    <source>
        <strain>COL</strain>
    </source>
</reference>